<gene>
    <name evidence="1" type="primary">rimO</name>
    <name type="ordered locus">lpg0685</name>
</gene>
<accession>Q5ZXP6</accession>
<comment type="function">
    <text evidence="1">Catalyzes the methylthiolation of an aspartic acid residue of ribosomal protein uS12.</text>
</comment>
<comment type="catalytic activity">
    <reaction evidence="1">
        <text>L-aspartate(89)-[ribosomal protein uS12]-hydrogen + (sulfur carrier)-SH + AH2 + 2 S-adenosyl-L-methionine = 3-methylsulfanyl-L-aspartate(89)-[ribosomal protein uS12]-hydrogen + (sulfur carrier)-H + 5'-deoxyadenosine + L-methionine + A + S-adenosyl-L-homocysteine + 2 H(+)</text>
        <dbReference type="Rhea" id="RHEA:37087"/>
        <dbReference type="Rhea" id="RHEA-COMP:10460"/>
        <dbReference type="Rhea" id="RHEA-COMP:10461"/>
        <dbReference type="Rhea" id="RHEA-COMP:14737"/>
        <dbReference type="Rhea" id="RHEA-COMP:14739"/>
        <dbReference type="ChEBI" id="CHEBI:13193"/>
        <dbReference type="ChEBI" id="CHEBI:15378"/>
        <dbReference type="ChEBI" id="CHEBI:17319"/>
        <dbReference type="ChEBI" id="CHEBI:17499"/>
        <dbReference type="ChEBI" id="CHEBI:29917"/>
        <dbReference type="ChEBI" id="CHEBI:29961"/>
        <dbReference type="ChEBI" id="CHEBI:57844"/>
        <dbReference type="ChEBI" id="CHEBI:57856"/>
        <dbReference type="ChEBI" id="CHEBI:59789"/>
        <dbReference type="ChEBI" id="CHEBI:64428"/>
        <dbReference type="ChEBI" id="CHEBI:73599"/>
        <dbReference type="EC" id="2.8.4.4"/>
    </reaction>
</comment>
<comment type="cofactor">
    <cofactor evidence="1">
        <name>[4Fe-4S] cluster</name>
        <dbReference type="ChEBI" id="CHEBI:49883"/>
    </cofactor>
    <text evidence="1">Binds 2 [4Fe-4S] clusters. One cluster is coordinated with 3 cysteines and an exchangeable S-adenosyl-L-methionine.</text>
</comment>
<comment type="subcellular location">
    <subcellularLocation>
        <location evidence="1">Cytoplasm</location>
    </subcellularLocation>
</comment>
<comment type="similarity">
    <text evidence="1">Belongs to the methylthiotransferase family. RimO subfamily.</text>
</comment>
<reference key="1">
    <citation type="journal article" date="2004" name="Science">
        <title>The genomic sequence of the accidental pathogen Legionella pneumophila.</title>
        <authorList>
            <person name="Chien M."/>
            <person name="Morozova I."/>
            <person name="Shi S."/>
            <person name="Sheng H."/>
            <person name="Chen J."/>
            <person name="Gomez S.M."/>
            <person name="Asamani G."/>
            <person name="Hill K."/>
            <person name="Nuara J."/>
            <person name="Feder M."/>
            <person name="Rineer J."/>
            <person name="Greenberg J.J."/>
            <person name="Steshenko V."/>
            <person name="Park S.H."/>
            <person name="Zhao B."/>
            <person name="Teplitskaya E."/>
            <person name="Edwards J.R."/>
            <person name="Pampou S."/>
            <person name="Georghiou A."/>
            <person name="Chou I.-C."/>
            <person name="Iannuccilli W."/>
            <person name="Ulz M.E."/>
            <person name="Kim D.H."/>
            <person name="Geringer-Sameth A."/>
            <person name="Goldsberry C."/>
            <person name="Morozov P."/>
            <person name="Fischer S.G."/>
            <person name="Segal G."/>
            <person name="Qu X."/>
            <person name="Rzhetsky A."/>
            <person name="Zhang P."/>
            <person name="Cayanis E."/>
            <person name="De Jong P.J."/>
            <person name="Ju J."/>
            <person name="Kalachikov S."/>
            <person name="Shuman H.A."/>
            <person name="Russo J.J."/>
        </authorList>
    </citation>
    <scope>NUCLEOTIDE SEQUENCE [LARGE SCALE GENOMIC DNA]</scope>
    <source>
        <strain>Philadelphia 1 / ATCC 33152 / DSM 7513</strain>
    </source>
</reference>
<organism>
    <name type="scientific">Legionella pneumophila subsp. pneumophila (strain Philadelphia 1 / ATCC 33152 / DSM 7513)</name>
    <dbReference type="NCBI Taxonomy" id="272624"/>
    <lineage>
        <taxon>Bacteria</taxon>
        <taxon>Pseudomonadati</taxon>
        <taxon>Pseudomonadota</taxon>
        <taxon>Gammaproteobacteria</taxon>
        <taxon>Legionellales</taxon>
        <taxon>Legionellaceae</taxon>
        <taxon>Legionella</taxon>
    </lineage>
</organism>
<dbReference type="EC" id="2.8.4.4" evidence="1"/>
<dbReference type="EMBL" id="AE017354">
    <property type="protein sequence ID" value="AAU26774.1"/>
    <property type="molecule type" value="Genomic_DNA"/>
</dbReference>
<dbReference type="RefSeq" id="WP_010946422.1">
    <property type="nucleotide sequence ID" value="NC_002942.5"/>
</dbReference>
<dbReference type="RefSeq" id="YP_094721.1">
    <property type="nucleotide sequence ID" value="NC_002942.5"/>
</dbReference>
<dbReference type="SMR" id="Q5ZXP6"/>
<dbReference type="STRING" id="272624.lpg0685"/>
<dbReference type="PaxDb" id="272624-lpg0685"/>
<dbReference type="GeneID" id="57034678"/>
<dbReference type="KEGG" id="lpn:lpg0685"/>
<dbReference type="PATRIC" id="fig|272624.6.peg.706"/>
<dbReference type="eggNOG" id="COG0621">
    <property type="taxonomic scope" value="Bacteria"/>
</dbReference>
<dbReference type="HOGENOM" id="CLU_018697_0_0_6"/>
<dbReference type="OrthoDB" id="9805215at2"/>
<dbReference type="Proteomes" id="UP000000609">
    <property type="component" value="Chromosome"/>
</dbReference>
<dbReference type="GO" id="GO:0005829">
    <property type="term" value="C:cytosol"/>
    <property type="evidence" value="ECO:0007669"/>
    <property type="project" value="TreeGrafter"/>
</dbReference>
<dbReference type="GO" id="GO:0051539">
    <property type="term" value="F:4 iron, 4 sulfur cluster binding"/>
    <property type="evidence" value="ECO:0007669"/>
    <property type="project" value="UniProtKB-UniRule"/>
</dbReference>
<dbReference type="GO" id="GO:0035599">
    <property type="term" value="F:aspartic acid methylthiotransferase activity"/>
    <property type="evidence" value="ECO:0007669"/>
    <property type="project" value="TreeGrafter"/>
</dbReference>
<dbReference type="GO" id="GO:0046872">
    <property type="term" value="F:metal ion binding"/>
    <property type="evidence" value="ECO:0007669"/>
    <property type="project" value="UniProtKB-KW"/>
</dbReference>
<dbReference type="GO" id="GO:0103039">
    <property type="term" value="F:protein methylthiotransferase activity"/>
    <property type="evidence" value="ECO:0007669"/>
    <property type="project" value="UniProtKB-EC"/>
</dbReference>
<dbReference type="GO" id="GO:0006400">
    <property type="term" value="P:tRNA modification"/>
    <property type="evidence" value="ECO:0007669"/>
    <property type="project" value="InterPro"/>
</dbReference>
<dbReference type="CDD" id="cd01335">
    <property type="entry name" value="Radical_SAM"/>
    <property type="match status" value="1"/>
</dbReference>
<dbReference type="FunFam" id="2.40.50.140:FF:000210">
    <property type="entry name" value="Ribosomal protein S12 methylthiotransferase RimO"/>
    <property type="match status" value="1"/>
</dbReference>
<dbReference type="FunFam" id="3.40.50.12160:FF:000002">
    <property type="entry name" value="Ribosomal protein S12 methylthiotransferase RimO"/>
    <property type="match status" value="1"/>
</dbReference>
<dbReference type="FunFam" id="3.80.30.20:FF:000001">
    <property type="entry name" value="tRNA-2-methylthio-N(6)-dimethylallyladenosine synthase 2"/>
    <property type="match status" value="1"/>
</dbReference>
<dbReference type="Gene3D" id="3.40.50.12160">
    <property type="entry name" value="Methylthiotransferase, N-terminal domain"/>
    <property type="match status" value="1"/>
</dbReference>
<dbReference type="Gene3D" id="2.40.50.140">
    <property type="entry name" value="Nucleic acid-binding proteins"/>
    <property type="match status" value="1"/>
</dbReference>
<dbReference type="Gene3D" id="3.80.30.20">
    <property type="entry name" value="tm_1862 like domain"/>
    <property type="match status" value="1"/>
</dbReference>
<dbReference type="HAMAP" id="MF_01865">
    <property type="entry name" value="MTTase_RimO"/>
    <property type="match status" value="1"/>
</dbReference>
<dbReference type="InterPro" id="IPR006638">
    <property type="entry name" value="Elp3/MiaA/NifB-like_rSAM"/>
</dbReference>
<dbReference type="InterPro" id="IPR005839">
    <property type="entry name" value="Methylthiotransferase"/>
</dbReference>
<dbReference type="InterPro" id="IPR020612">
    <property type="entry name" value="Methylthiotransferase_CS"/>
</dbReference>
<dbReference type="InterPro" id="IPR013848">
    <property type="entry name" value="Methylthiotransferase_N"/>
</dbReference>
<dbReference type="InterPro" id="IPR038135">
    <property type="entry name" value="Methylthiotransferase_N_sf"/>
</dbReference>
<dbReference type="InterPro" id="IPR012340">
    <property type="entry name" value="NA-bd_OB-fold"/>
</dbReference>
<dbReference type="InterPro" id="IPR005840">
    <property type="entry name" value="Ribosomal_uS12_MeSTrfase_RimO"/>
</dbReference>
<dbReference type="InterPro" id="IPR007197">
    <property type="entry name" value="rSAM"/>
</dbReference>
<dbReference type="InterPro" id="IPR023404">
    <property type="entry name" value="rSAM_horseshoe"/>
</dbReference>
<dbReference type="InterPro" id="IPR002792">
    <property type="entry name" value="TRAM_dom"/>
</dbReference>
<dbReference type="NCBIfam" id="TIGR01125">
    <property type="entry name" value="30S ribosomal protein S12 methylthiotransferase RimO"/>
    <property type="match status" value="1"/>
</dbReference>
<dbReference type="NCBIfam" id="TIGR00089">
    <property type="entry name" value="MiaB/RimO family radical SAM methylthiotransferase"/>
    <property type="match status" value="1"/>
</dbReference>
<dbReference type="PANTHER" id="PTHR43837">
    <property type="entry name" value="RIBOSOMAL PROTEIN S12 METHYLTHIOTRANSFERASE RIMO"/>
    <property type="match status" value="1"/>
</dbReference>
<dbReference type="PANTHER" id="PTHR43837:SF1">
    <property type="entry name" value="RIBOSOMAL PROTEIN US12 METHYLTHIOTRANSFERASE RIMO"/>
    <property type="match status" value="1"/>
</dbReference>
<dbReference type="Pfam" id="PF04055">
    <property type="entry name" value="Radical_SAM"/>
    <property type="match status" value="1"/>
</dbReference>
<dbReference type="Pfam" id="PF18693">
    <property type="entry name" value="TRAM_2"/>
    <property type="match status" value="1"/>
</dbReference>
<dbReference type="Pfam" id="PF00919">
    <property type="entry name" value="UPF0004"/>
    <property type="match status" value="1"/>
</dbReference>
<dbReference type="SFLD" id="SFLDG01082">
    <property type="entry name" value="B12-binding_domain_containing"/>
    <property type="match status" value="1"/>
</dbReference>
<dbReference type="SFLD" id="SFLDS00029">
    <property type="entry name" value="Radical_SAM"/>
    <property type="match status" value="1"/>
</dbReference>
<dbReference type="SFLD" id="SFLDF00274">
    <property type="entry name" value="ribosomal_protein_S12_methylth"/>
    <property type="match status" value="1"/>
</dbReference>
<dbReference type="SMART" id="SM00729">
    <property type="entry name" value="Elp3"/>
    <property type="match status" value="1"/>
</dbReference>
<dbReference type="SUPFAM" id="SSF102114">
    <property type="entry name" value="Radical SAM enzymes"/>
    <property type="match status" value="1"/>
</dbReference>
<dbReference type="PROSITE" id="PS51449">
    <property type="entry name" value="MTTASE_N"/>
    <property type="match status" value="1"/>
</dbReference>
<dbReference type="PROSITE" id="PS01278">
    <property type="entry name" value="MTTASE_RADICAL"/>
    <property type="match status" value="1"/>
</dbReference>
<dbReference type="PROSITE" id="PS51918">
    <property type="entry name" value="RADICAL_SAM"/>
    <property type="match status" value="1"/>
</dbReference>
<dbReference type="PROSITE" id="PS50926">
    <property type="entry name" value="TRAM"/>
    <property type="match status" value="1"/>
</dbReference>
<feature type="chain" id="PRO_0000374876" description="Ribosomal protein uS12 methylthiotransferase RimO">
    <location>
        <begin position="1"/>
        <end position="435"/>
    </location>
</feature>
<feature type="domain" description="MTTase N-terminal" evidence="1">
    <location>
        <begin position="3"/>
        <end position="113"/>
    </location>
</feature>
<feature type="domain" description="Radical SAM core" evidence="2">
    <location>
        <begin position="130"/>
        <end position="367"/>
    </location>
</feature>
<feature type="domain" description="TRAM" evidence="1">
    <location>
        <begin position="370"/>
        <end position="435"/>
    </location>
</feature>
<feature type="binding site" evidence="1">
    <location>
        <position position="12"/>
    </location>
    <ligand>
        <name>[4Fe-4S] cluster</name>
        <dbReference type="ChEBI" id="CHEBI:49883"/>
        <label>1</label>
    </ligand>
</feature>
<feature type="binding site" evidence="1">
    <location>
        <position position="48"/>
    </location>
    <ligand>
        <name>[4Fe-4S] cluster</name>
        <dbReference type="ChEBI" id="CHEBI:49883"/>
        <label>1</label>
    </ligand>
</feature>
<feature type="binding site" evidence="1">
    <location>
        <position position="77"/>
    </location>
    <ligand>
        <name>[4Fe-4S] cluster</name>
        <dbReference type="ChEBI" id="CHEBI:49883"/>
        <label>1</label>
    </ligand>
</feature>
<feature type="binding site" evidence="1">
    <location>
        <position position="144"/>
    </location>
    <ligand>
        <name>[4Fe-4S] cluster</name>
        <dbReference type="ChEBI" id="CHEBI:49883"/>
        <label>2</label>
        <note>4Fe-4S-S-AdoMet</note>
    </ligand>
</feature>
<feature type="binding site" evidence="1">
    <location>
        <position position="148"/>
    </location>
    <ligand>
        <name>[4Fe-4S] cluster</name>
        <dbReference type="ChEBI" id="CHEBI:49883"/>
        <label>2</label>
        <note>4Fe-4S-S-AdoMet</note>
    </ligand>
</feature>
<feature type="binding site" evidence="1">
    <location>
        <position position="151"/>
    </location>
    <ligand>
        <name>[4Fe-4S] cluster</name>
        <dbReference type="ChEBI" id="CHEBI:49883"/>
        <label>2</label>
        <note>4Fe-4S-S-AdoMet</note>
    </ligand>
</feature>
<name>RIMO_LEGPH</name>
<evidence type="ECO:0000255" key="1">
    <source>
        <dbReference type="HAMAP-Rule" id="MF_01865"/>
    </source>
</evidence>
<evidence type="ECO:0000255" key="2">
    <source>
        <dbReference type="PROSITE-ProRule" id="PRU01266"/>
    </source>
</evidence>
<proteinExistence type="inferred from homology"/>
<sequence>MNHKVGFVSLGCPKALVDSERIITQLKAQGYELVPTYQDAGVVVINTCGFIDSAVQESLDTIKEAMAENGRVIVTGCLGAKADVIKNACPDVLHISGAHAYEEVVNAVHQYLPPPADPFTQLIPPQGIKLTPRHYAYLKISEGCNQKCTFCIIPTMRGKLQSYPMAQILTEAKKLKQAGVKELLVISQDTSAYGVDTRYQQVEWQGKTVNTRFYDLCEQLGELGIWVRLHYVYPYPHVDDIVPLMRDGLILPYLDIPLQHANSRILKAMKRPASSENTLLRIASWREICPDITLRSTFIVGFPGETEEEFSELLAFLKEAQLDRVGCFKYSPVEGAKANDLDNPVSEDIKEERYHRFMQVQAEISRNKLKNKIGSTQTVLIDEINDDQIIARSKSDAPEIDGLVYLPKTSGITVGSFAEVVITDSDDYDLYASLV</sequence>
<protein>
    <recommendedName>
        <fullName evidence="1">Ribosomal protein uS12 methylthiotransferase RimO</fullName>
        <shortName evidence="1">uS12 MTTase</shortName>
        <shortName evidence="1">uS12 methylthiotransferase</shortName>
        <ecNumber evidence="1">2.8.4.4</ecNumber>
    </recommendedName>
    <alternativeName>
        <fullName evidence="1">Ribosomal protein uS12 (aspartate-C(3))-methylthiotransferase</fullName>
    </alternativeName>
    <alternativeName>
        <fullName evidence="1">Ribosome maturation factor RimO</fullName>
    </alternativeName>
</protein>
<keyword id="KW-0004">4Fe-4S</keyword>
<keyword id="KW-0963">Cytoplasm</keyword>
<keyword id="KW-0408">Iron</keyword>
<keyword id="KW-0411">Iron-sulfur</keyword>
<keyword id="KW-0479">Metal-binding</keyword>
<keyword id="KW-1185">Reference proteome</keyword>
<keyword id="KW-0949">S-adenosyl-L-methionine</keyword>
<keyword id="KW-0808">Transferase</keyword>